<dbReference type="EC" id="6.3.2.9" evidence="1"/>
<dbReference type="EMBL" id="CP001037">
    <property type="protein sequence ID" value="ACC82388.1"/>
    <property type="molecule type" value="Genomic_DNA"/>
</dbReference>
<dbReference type="RefSeq" id="WP_012410355.1">
    <property type="nucleotide sequence ID" value="NC_010628.1"/>
</dbReference>
<dbReference type="SMR" id="B2J6I3"/>
<dbReference type="STRING" id="63737.Npun_R4009"/>
<dbReference type="EnsemblBacteria" id="ACC82388">
    <property type="protein sequence ID" value="ACC82388"/>
    <property type="gene ID" value="Npun_R4009"/>
</dbReference>
<dbReference type="KEGG" id="npu:Npun_R4009"/>
<dbReference type="eggNOG" id="COG0771">
    <property type="taxonomic scope" value="Bacteria"/>
</dbReference>
<dbReference type="HOGENOM" id="CLU_032540_0_0_3"/>
<dbReference type="OrthoDB" id="9809796at2"/>
<dbReference type="PhylomeDB" id="B2J6I3"/>
<dbReference type="UniPathway" id="UPA00219"/>
<dbReference type="Proteomes" id="UP000001191">
    <property type="component" value="Chromosome"/>
</dbReference>
<dbReference type="GO" id="GO:0005737">
    <property type="term" value="C:cytoplasm"/>
    <property type="evidence" value="ECO:0007669"/>
    <property type="project" value="UniProtKB-SubCell"/>
</dbReference>
<dbReference type="GO" id="GO:0005524">
    <property type="term" value="F:ATP binding"/>
    <property type="evidence" value="ECO:0007669"/>
    <property type="project" value="UniProtKB-UniRule"/>
</dbReference>
<dbReference type="GO" id="GO:0008764">
    <property type="term" value="F:UDP-N-acetylmuramoylalanine-D-glutamate ligase activity"/>
    <property type="evidence" value="ECO:0007669"/>
    <property type="project" value="UniProtKB-UniRule"/>
</dbReference>
<dbReference type="GO" id="GO:0051301">
    <property type="term" value="P:cell division"/>
    <property type="evidence" value="ECO:0007669"/>
    <property type="project" value="UniProtKB-KW"/>
</dbReference>
<dbReference type="GO" id="GO:0071555">
    <property type="term" value="P:cell wall organization"/>
    <property type="evidence" value="ECO:0007669"/>
    <property type="project" value="UniProtKB-KW"/>
</dbReference>
<dbReference type="GO" id="GO:0009252">
    <property type="term" value="P:peptidoglycan biosynthetic process"/>
    <property type="evidence" value="ECO:0007669"/>
    <property type="project" value="UniProtKB-UniRule"/>
</dbReference>
<dbReference type="GO" id="GO:0008360">
    <property type="term" value="P:regulation of cell shape"/>
    <property type="evidence" value="ECO:0007669"/>
    <property type="project" value="UniProtKB-KW"/>
</dbReference>
<dbReference type="Gene3D" id="3.90.190.20">
    <property type="entry name" value="Mur ligase, C-terminal domain"/>
    <property type="match status" value="1"/>
</dbReference>
<dbReference type="Gene3D" id="3.40.1190.10">
    <property type="entry name" value="Mur-like, catalytic domain"/>
    <property type="match status" value="1"/>
</dbReference>
<dbReference type="Gene3D" id="3.40.50.720">
    <property type="entry name" value="NAD(P)-binding Rossmann-like Domain"/>
    <property type="match status" value="1"/>
</dbReference>
<dbReference type="HAMAP" id="MF_00639">
    <property type="entry name" value="MurD"/>
    <property type="match status" value="1"/>
</dbReference>
<dbReference type="InterPro" id="IPR036565">
    <property type="entry name" value="Mur-like_cat_sf"/>
</dbReference>
<dbReference type="InterPro" id="IPR004101">
    <property type="entry name" value="Mur_ligase_C"/>
</dbReference>
<dbReference type="InterPro" id="IPR036615">
    <property type="entry name" value="Mur_ligase_C_dom_sf"/>
</dbReference>
<dbReference type="InterPro" id="IPR013221">
    <property type="entry name" value="Mur_ligase_cen"/>
</dbReference>
<dbReference type="InterPro" id="IPR005762">
    <property type="entry name" value="MurD"/>
</dbReference>
<dbReference type="NCBIfam" id="TIGR01087">
    <property type="entry name" value="murD"/>
    <property type="match status" value="1"/>
</dbReference>
<dbReference type="PANTHER" id="PTHR43692">
    <property type="entry name" value="UDP-N-ACETYLMURAMOYLALANINE--D-GLUTAMATE LIGASE"/>
    <property type="match status" value="1"/>
</dbReference>
<dbReference type="PANTHER" id="PTHR43692:SF1">
    <property type="entry name" value="UDP-N-ACETYLMURAMOYLALANINE--D-GLUTAMATE LIGASE"/>
    <property type="match status" value="1"/>
</dbReference>
<dbReference type="Pfam" id="PF02875">
    <property type="entry name" value="Mur_ligase_C"/>
    <property type="match status" value="1"/>
</dbReference>
<dbReference type="Pfam" id="PF08245">
    <property type="entry name" value="Mur_ligase_M"/>
    <property type="match status" value="1"/>
</dbReference>
<dbReference type="Pfam" id="PF21799">
    <property type="entry name" value="MurD-like_N"/>
    <property type="match status" value="1"/>
</dbReference>
<dbReference type="SUPFAM" id="SSF51984">
    <property type="entry name" value="MurCD N-terminal domain"/>
    <property type="match status" value="1"/>
</dbReference>
<dbReference type="SUPFAM" id="SSF53623">
    <property type="entry name" value="MurD-like peptide ligases, catalytic domain"/>
    <property type="match status" value="1"/>
</dbReference>
<dbReference type="SUPFAM" id="SSF53244">
    <property type="entry name" value="MurD-like peptide ligases, peptide-binding domain"/>
    <property type="match status" value="1"/>
</dbReference>
<evidence type="ECO:0000255" key="1">
    <source>
        <dbReference type="HAMAP-Rule" id="MF_00639"/>
    </source>
</evidence>
<reference key="1">
    <citation type="journal article" date="2013" name="Plant Physiol.">
        <title>A Nostoc punctiforme Sugar Transporter Necessary to Establish a Cyanobacterium-Plant Symbiosis.</title>
        <authorList>
            <person name="Ekman M."/>
            <person name="Picossi S."/>
            <person name="Campbell E.L."/>
            <person name="Meeks J.C."/>
            <person name="Flores E."/>
        </authorList>
    </citation>
    <scope>NUCLEOTIDE SEQUENCE [LARGE SCALE GENOMIC DNA]</scope>
    <source>
        <strain>ATCC 29133 / PCC 73102</strain>
    </source>
</reference>
<keyword id="KW-0067">ATP-binding</keyword>
<keyword id="KW-0131">Cell cycle</keyword>
<keyword id="KW-0132">Cell division</keyword>
<keyword id="KW-0133">Cell shape</keyword>
<keyword id="KW-0961">Cell wall biogenesis/degradation</keyword>
<keyword id="KW-0963">Cytoplasm</keyword>
<keyword id="KW-0436">Ligase</keyword>
<keyword id="KW-0547">Nucleotide-binding</keyword>
<keyword id="KW-0573">Peptidoglycan synthesis</keyword>
<keyword id="KW-1185">Reference proteome</keyword>
<accession>B2J6I3</accession>
<comment type="function">
    <text evidence="1">Cell wall formation. Catalyzes the addition of glutamate to the nucleotide precursor UDP-N-acetylmuramoyl-L-alanine (UMA).</text>
</comment>
<comment type="catalytic activity">
    <reaction evidence="1">
        <text>UDP-N-acetyl-alpha-D-muramoyl-L-alanine + D-glutamate + ATP = UDP-N-acetyl-alpha-D-muramoyl-L-alanyl-D-glutamate + ADP + phosphate + H(+)</text>
        <dbReference type="Rhea" id="RHEA:16429"/>
        <dbReference type="ChEBI" id="CHEBI:15378"/>
        <dbReference type="ChEBI" id="CHEBI:29986"/>
        <dbReference type="ChEBI" id="CHEBI:30616"/>
        <dbReference type="ChEBI" id="CHEBI:43474"/>
        <dbReference type="ChEBI" id="CHEBI:83898"/>
        <dbReference type="ChEBI" id="CHEBI:83900"/>
        <dbReference type="ChEBI" id="CHEBI:456216"/>
        <dbReference type="EC" id="6.3.2.9"/>
    </reaction>
</comment>
<comment type="pathway">
    <text evidence="1">Cell wall biogenesis; peptidoglycan biosynthesis.</text>
</comment>
<comment type="subcellular location">
    <subcellularLocation>
        <location evidence="1">Cytoplasm</location>
    </subcellularLocation>
</comment>
<comment type="similarity">
    <text evidence="1">Belongs to the MurCDEF family.</text>
</comment>
<sequence>MSKAHVIGLGKSGVAAARLLKREGWEVELSDGNTSKTLLQQQQELAAEQITVKLGQSLELNGDNLPQLIVVSPGVPWDIPVLIKARQLGIETIGEMELAWRNLRWRSQPQASLPWVGITGTNGKTTTTALIAAIFQAAELDAPACGNIGYAACEVALSWSGRGAGGREQGAGGDREVNSSSSPSLDWVIAEVSSYQIESSSSLAPRIGVWTTFTPDHLSRHKTLENYYNIKAKLLRQSELQVFNGDDAYLSQLGLSAWPNAYWTSVKGKDFLISEKGFYIENGWVVEKLTATSAPEPIVKVSTLRMVGEHNQQNLLMAVATARLAGINRDAIARAIQEFPGVPHRLEHICTWEGIDFINDSKATNYDAAEVGLASVKSPAILIAGGEAKAGDDTGWLAQIQTKAAAVLLIGSAAPAFAQRLQEVGYYSYEIVETMERAVPRSAELAKEYQAPVVLLSPACASFDQYPNFEVRGDRFRELCLAWAAGGKLQHNLMLSSSL</sequence>
<name>MURD_NOSP7</name>
<feature type="chain" id="PRO_1000130867" description="UDP-N-acetylmuramoylalanine--D-glutamate ligase">
    <location>
        <begin position="1"/>
        <end position="499"/>
    </location>
</feature>
<feature type="binding site" evidence="1">
    <location>
        <begin position="120"/>
        <end position="126"/>
    </location>
    <ligand>
        <name>ATP</name>
        <dbReference type="ChEBI" id="CHEBI:30616"/>
    </ligand>
</feature>
<organism>
    <name type="scientific">Nostoc punctiforme (strain ATCC 29133 / PCC 73102)</name>
    <dbReference type="NCBI Taxonomy" id="63737"/>
    <lineage>
        <taxon>Bacteria</taxon>
        <taxon>Bacillati</taxon>
        <taxon>Cyanobacteriota</taxon>
        <taxon>Cyanophyceae</taxon>
        <taxon>Nostocales</taxon>
        <taxon>Nostocaceae</taxon>
        <taxon>Nostoc</taxon>
    </lineage>
</organism>
<gene>
    <name evidence="1" type="primary">murD</name>
    <name type="ordered locus">Npun_R4009</name>
</gene>
<proteinExistence type="inferred from homology"/>
<protein>
    <recommendedName>
        <fullName evidence="1">UDP-N-acetylmuramoylalanine--D-glutamate ligase</fullName>
        <ecNumber evidence="1">6.3.2.9</ecNumber>
    </recommendedName>
    <alternativeName>
        <fullName evidence="1">D-glutamic acid-adding enzyme</fullName>
    </alternativeName>
    <alternativeName>
        <fullName evidence="1">UDP-N-acetylmuramoyl-L-alanyl-D-glutamate synthetase</fullName>
    </alternativeName>
</protein>